<keyword id="KW-0456">Lyase</keyword>
<keyword id="KW-0663">Pyridoxal phosphate</keyword>
<proteinExistence type="inferred from homology"/>
<protein>
    <recommendedName>
        <fullName evidence="1">D-serine dehydratase</fullName>
        <ecNumber evidence="1">4.3.1.18</ecNumber>
    </recommendedName>
    <alternativeName>
        <fullName evidence="1">D-serine deaminase</fullName>
        <shortName evidence="1">DSD</shortName>
    </alternativeName>
</protein>
<name>SDHD_SALCH</name>
<feature type="chain" id="PRO_0000291739" description="D-serine dehydratase">
    <location>
        <begin position="1"/>
        <end position="440"/>
    </location>
</feature>
<feature type="modified residue" description="N6-(pyridoxal phosphate)lysine" evidence="1">
    <location>
        <position position="116"/>
    </location>
</feature>
<gene>
    <name evidence="1" type="primary">dsdA</name>
    <name type="ordered locus">SCH_3724</name>
</gene>
<comment type="catalytic activity">
    <reaction evidence="1">
        <text>D-serine = pyruvate + NH4(+)</text>
        <dbReference type="Rhea" id="RHEA:13977"/>
        <dbReference type="ChEBI" id="CHEBI:15361"/>
        <dbReference type="ChEBI" id="CHEBI:28938"/>
        <dbReference type="ChEBI" id="CHEBI:35247"/>
        <dbReference type="EC" id="4.3.1.18"/>
    </reaction>
</comment>
<comment type="cofactor">
    <cofactor evidence="1">
        <name>pyridoxal 5'-phosphate</name>
        <dbReference type="ChEBI" id="CHEBI:597326"/>
    </cofactor>
</comment>
<comment type="subunit">
    <text evidence="1">Monomer.</text>
</comment>
<comment type="similarity">
    <text evidence="1">Belongs to the serine/threonine dehydratase family. DsdA subfamily.</text>
</comment>
<evidence type="ECO:0000255" key="1">
    <source>
        <dbReference type="HAMAP-Rule" id="MF_01030"/>
    </source>
</evidence>
<organism>
    <name type="scientific">Salmonella choleraesuis (strain SC-B67)</name>
    <dbReference type="NCBI Taxonomy" id="321314"/>
    <lineage>
        <taxon>Bacteria</taxon>
        <taxon>Pseudomonadati</taxon>
        <taxon>Pseudomonadota</taxon>
        <taxon>Gammaproteobacteria</taxon>
        <taxon>Enterobacterales</taxon>
        <taxon>Enterobacteriaceae</taxon>
        <taxon>Salmonella</taxon>
    </lineage>
</organism>
<accession>Q57I32</accession>
<reference key="1">
    <citation type="journal article" date="2005" name="Nucleic Acids Res.">
        <title>The genome sequence of Salmonella enterica serovar Choleraesuis, a highly invasive and resistant zoonotic pathogen.</title>
        <authorList>
            <person name="Chiu C.-H."/>
            <person name="Tang P."/>
            <person name="Chu C."/>
            <person name="Hu S."/>
            <person name="Bao Q."/>
            <person name="Yu J."/>
            <person name="Chou Y.-Y."/>
            <person name="Wang H.-S."/>
            <person name="Lee Y.-S."/>
        </authorList>
    </citation>
    <scope>NUCLEOTIDE SEQUENCE [LARGE SCALE GENOMIC DNA]</scope>
    <source>
        <strain>SC-B67</strain>
    </source>
</reference>
<sequence length="440" mass="47354">MENIQKLIARYPLVEDLVALKETTWFNPGATSLAQGLPYVGLTEQDVNAAHDRLARFAPYLAKAFPQTAAAGGMIESDVVAIPAMQKRLEKEYGQTIDGEMLLKKDSHLAISGSIKARGGIYEVLTHAEKLALEAGLLTTDDDYSVLLSPEFKQFFSQYSIAVGSTGNLGLSIGIMSACIGFKVTVHMSADARAWKKAKLRSHGVTVVEYEDDYGVAVEQGRKAAQSDPNCFFIDDENSRTLFLGYAVAGQRLKAQFAQQGRVVDASHPLFVYLPCGVGGGPGGVAFGLKLAFGDNVHCFFAEPTHSPCMLLGVYTGLHDAISVQDIGIDNLTAADGLAVGRASGFVGRAMERLLDGLYTLDDQTMYDMLGWLAQEEGIRLEPSALAGMAGPQRICAAVAYQQRHGFSQTQLGNATHLVWATGGGMVPEDEMEQYLAKGR</sequence>
<dbReference type="EC" id="4.3.1.18" evidence="1"/>
<dbReference type="EMBL" id="AE017220">
    <property type="protein sequence ID" value="AAX67630.1"/>
    <property type="molecule type" value="Genomic_DNA"/>
</dbReference>
<dbReference type="RefSeq" id="WP_000427990.1">
    <property type="nucleotide sequence ID" value="NC_006905.1"/>
</dbReference>
<dbReference type="SMR" id="Q57I32"/>
<dbReference type="KEGG" id="sec:SCH_3724"/>
<dbReference type="HOGENOM" id="CLU_035707_0_0_6"/>
<dbReference type="Proteomes" id="UP000000538">
    <property type="component" value="Chromosome"/>
</dbReference>
<dbReference type="GO" id="GO:0008721">
    <property type="term" value="F:D-serine ammonia-lyase activity"/>
    <property type="evidence" value="ECO:0007669"/>
    <property type="project" value="UniProtKB-EC"/>
</dbReference>
<dbReference type="GO" id="GO:0016836">
    <property type="term" value="F:hydro-lyase activity"/>
    <property type="evidence" value="ECO:0007669"/>
    <property type="project" value="UniProtKB-UniRule"/>
</dbReference>
<dbReference type="GO" id="GO:0030170">
    <property type="term" value="F:pyridoxal phosphate binding"/>
    <property type="evidence" value="ECO:0007669"/>
    <property type="project" value="InterPro"/>
</dbReference>
<dbReference type="GO" id="GO:0036088">
    <property type="term" value="P:D-serine catabolic process"/>
    <property type="evidence" value="ECO:0007669"/>
    <property type="project" value="TreeGrafter"/>
</dbReference>
<dbReference type="GO" id="GO:0009097">
    <property type="term" value="P:isoleucine biosynthetic process"/>
    <property type="evidence" value="ECO:0007669"/>
    <property type="project" value="TreeGrafter"/>
</dbReference>
<dbReference type="CDD" id="cd06447">
    <property type="entry name" value="D-Ser-dehyd"/>
    <property type="match status" value="1"/>
</dbReference>
<dbReference type="FunFam" id="3.40.50.1100:FF:000018">
    <property type="entry name" value="D-serine dehydratase"/>
    <property type="match status" value="1"/>
</dbReference>
<dbReference type="Gene3D" id="3.40.50.1100">
    <property type="match status" value="2"/>
</dbReference>
<dbReference type="HAMAP" id="MF_01030">
    <property type="entry name" value="D_Ser_dehydrat"/>
    <property type="match status" value="1"/>
</dbReference>
<dbReference type="InterPro" id="IPR011780">
    <property type="entry name" value="D_Ser_am_lyase"/>
</dbReference>
<dbReference type="InterPro" id="IPR050147">
    <property type="entry name" value="Ser/Thr_Dehydratase"/>
</dbReference>
<dbReference type="InterPro" id="IPR000634">
    <property type="entry name" value="Ser/Thr_deHydtase_PyrdxlP-BS"/>
</dbReference>
<dbReference type="InterPro" id="IPR001926">
    <property type="entry name" value="TrpB-like_PALP"/>
</dbReference>
<dbReference type="InterPro" id="IPR036052">
    <property type="entry name" value="TrpB-like_PALP_sf"/>
</dbReference>
<dbReference type="NCBIfam" id="TIGR02035">
    <property type="entry name" value="D_Ser_am_lyase"/>
    <property type="match status" value="1"/>
</dbReference>
<dbReference type="NCBIfam" id="NF002823">
    <property type="entry name" value="PRK02991.1"/>
    <property type="match status" value="1"/>
</dbReference>
<dbReference type="PANTHER" id="PTHR48078:SF9">
    <property type="entry name" value="D-SERINE DEHYDRATASE"/>
    <property type="match status" value="1"/>
</dbReference>
<dbReference type="PANTHER" id="PTHR48078">
    <property type="entry name" value="THREONINE DEHYDRATASE, MITOCHONDRIAL-RELATED"/>
    <property type="match status" value="1"/>
</dbReference>
<dbReference type="Pfam" id="PF00291">
    <property type="entry name" value="PALP"/>
    <property type="match status" value="1"/>
</dbReference>
<dbReference type="SUPFAM" id="SSF53686">
    <property type="entry name" value="Tryptophan synthase beta subunit-like PLP-dependent enzymes"/>
    <property type="match status" value="1"/>
</dbReference>
<dbReference type="PROSITE" id="PS00165">
    <property type="entry name" value="DEHYDRATASE_SER_THR"/>
    <property type="match status" value="1"/>
</dbReference>